<proteinExistence type="evidence at transcript level"/>
<keyword id="KW-0072">Autophagy</keyword>
<keyword id="KW-0175">Coiled coil</keyword>
<keyword id="KW-0963">Cytoplasm</keyword>
<keyword id="KW-0967">Endosome</keyword>
<keyword id="KW-0458">Lysosome</keyword>
<keyword id="KW-0472">Membrane</keyword>
<keyword id="KW-0597">Phosphoprotein</keyword>
<keyword id="KW-0653">Protein transport</keyword>
<keyword id="KW-1185">Reference proteome</keyword>
<keyword id="KW-0677">Repeat</keyword>
<keyword id="KW-0813">Transport</keyword>
<keyword id="KW-0853">WD repeat</keyword>
<dbReference type="EMBL" id="CR859089">
    <property type="protein sequence ID" value="CAH91281.1"/>
    <property type="molecule type" value="mRNA"/>
</dbReference>
<dbReference type="RefSeq" id="NP_001125757.1">
    <property type="nucleotide sequence ID" value="NM_001132285.2"/>
</dbReference>
<dbReference type="SMR" id="Q5RAC9"/>
<dbReference type="FunCoup" id="Q5RAC9">
    <property type="interactions" value="2971"/>
</dbReference>
<dbReference type="STRING" id="9601.ENSPPYP00000014856"/>
<dbReference type="GeneID" id="100172682"/>
<dbReference type="KEGG" id="pon:100172682"/>
<dbReference type="CTD" id="55054"/>
<dbReference type="eggNOG" id="KOG0288">
    <property type="taxonomic scope" value="Eukaryota"/>
</dbReference>
<dbReference type="InParanoid" id="Q5RAC9"/>
<dbReference type="OrthoDB" id="6262491at2759"/>
<dbReference type="Proteomes" id="UP000001595">
    <property type="component" value="Unplaced"/>
</dbReference>
<dbReference type="GO" id="GO:0034274">
    <property type="term" value="C:Atg12-Atg5-Atg16 complex"/>
    <property type="evidence" value="ECO:0000250"/>
    <property type="project" value="UniProtKB"/>
</dbReference>
<dbReference type="GO" id="GO:0000421">
    <property type="term" value="C:autophagosome membrane"/>
    <property type="evidence" value="ECO:0000250"/>
    <property type="project" value="UniProtKB"/>
</dbReference>
<dbReference type="GO" id="GO:0005930">
    <property type="term" value="C:axoneme"/>
    <property type="evidence" value="ECO:0000250"/>
    <property type="project" value="UniProtKB"/>
</dbReference>
<dbReference type="GO" id="GO:0005737">
    <property type="term" value="C:cytoplasm"/>
    <property type="evidence" value="ECO:0000250"/>
    <property type="project" value="UniProtKB"/>
</dbReference>
<dbReference type="GO" id="GO:0036020">
    <property type="term" value="C:endolysosome membrane"/>
    <property type="evidence" value="ECO:0000250"/>
    <property type="project" value="UniProtKB"/>
</dbReference>
<dbReference type="GO" id="GO:0034045">
    <property type="term" value="C:phagophore assembly site membrane"/>
    <property type="evidence" value="ECO:0000250"/>
    <property type="project" value="UniProtKB"/>
</dbReference>
<dbReference type="GO" id="GO:0097225">
    <property type="term" value="C:sperm midpiece"/>
    <property type="evidence" value="ECO:0000250"/>
    <property type="project" value="UniProtKB"/>
</dbReference>
<dbReference type="GO" id="GO:0120095">
    <property type="term" value="C:vacuole-isolation membrane contact site"/>
    <property type="evidence" value="ECO:0000250"/>
    <property type="project" value="UniProtKB"/>
</dbReference>
<dbReference type="GO" id="GO:0043495">
    <property type="term" value="F:protein-membrane adaptor activity"/>
    <property type="evidence" value="ECO:0007669"/>
    <property type="project" value="TreeGrafter"/>
</dbReference>
<dbReference type="GO" id="GO:0006501">
    <property type="term" value="P:C-terminal protein lipidation"/>
    <property type="evidence" value="ECO:0000250"/>
    <property type="project" value="UniProtKB"/>
</dbReference>
<dbReference type="GO" id="GO:0016236">
    <property type="term" value="P:macroautophagy"/>
    <property type="evidence" value="ECO:0000250"/>
    <property type="project" value="UniProtKB"/>
</dbReference>
<dbReference type="GO" id="GO:0016237">
    <property type="term" value="P:microautophagy"/>
    <property type="evidence" value="ECO:0000250"/>
    <property type="project" value="UniProtKB"/>
</dbReference>
<dbReference type="GO" id="GO:0034497">
    <property type="term" value="P:protein localization to phagophore assembly site"/>
    <property type="evidence" value="ECO:0000250"/>
    <property type="project" value="UniProtKB"/>
</dbReference>
<dbReference type="GO" id="GO:0015031">
    <property type="term" value="P:protein transport"/>
    <property type="evidence" value="ECO:0007669"/>
    <property type="project" value="UniProtKB-KW"/>
</dbReference>
<dbReference type="CDD" id="cd22887">
    <property type="entry name" value="Atg16_CCD"/>
    <property type="match status" value="1"/>
</dbReference>
<dbReference type="CDD" id="cd00200">
    <property type="entry name" value="WD40"/>
    <property type="match status" value="1"/>
</dbReference>
<dbReference type="FunFam" id="2.130.10.10:FF:000337">
    <property type="entry name" value="ATG16 autophagy related 16-like 1 (S. cerevisiae)"/>
    <property type="match status" value="1"/>
</dbReference>
<dbReference type="FunFam" id="2.130.10.10:FF:000607">
    <property type="entry name" value="Autophagy related 16 like 1"/>
    <property type="match status" value="1"/>
</dbReference>
<dbReference type="FunFam" id="1.20.5.170:FF:000039">
    <property type="entry name" value="Autophagy-related protein 16-1 isoform 1"/>
    <property type="match status" value="1"/>
</dbReference>
<dbReference type="FunFam" id="2.130.10.10:FF:000155">
    <property type="entry name" value="Autophagy-related protein 16-1 isoform 1"/>
    <property type="match status" value="1"/>
</dbReference>
<dbReference type="Gene3D" id="1.20.5.170">
    <property type="match status" value="1"/>
</dbReference>
<dbReference type="Gene3D" id="2.130.10.10">
    <property type="entry name" value="YVTN repeat-like/Quinoprotein amine dehydrogenase"/>
    <property type="match status" value="2"/>
</dbReference>
<dbReference type="InterPro" id="IPR045160">
    <property type="entry name" value="ATG16"/>
</dbReference>
<dbReference type="InterPro" id="IPR013923">
    <property type="entry name" value="Autophagy-rel_prot_16_dom"/>
</dbReference>
<dbReference type="InterPro" id="IPR020472">
    <property type="entry name" value="G-protein_beta_WD-40_rep"/>
</dbReference>
<dbReference type="InterPro" id="IPR015943">
    <property type="entry name" value="WD40/YVTN_repeat-like_dom_sf"/>
</dbReference>
<dbReference type="InterPro" id="IPR019775">
    <property type="entry name" value="WD40_repeat_CS"/>
</dbReference>
<dbReference type="InterPro" id="IPR036322">
    <property type="entry name" value="WD40_repeat_dom_sf"/>
</dbReference>
<dbReference type="InterPro" id="IPR001680">
    <property type="entry name" value="WD40_rpt"/>
</dbReference>
<dbReference type="PANTHER" id="PTHR19878">
    <property type="entry name" value="AUTOPHAGY PROTEIN 16-LIKE"/>
    <property type="match status" value="1"/>
</dbReference>
<dbReference type="PANTHER" id="PTHR19878:SF6">
    <property type="entry name" value="AUTOPHAGY-RELATED PROTEIN 16-1"/>
    <property type="match status" value="1"/>
</dbReference>
<dbReference type="Pfam" id="PF08614">
    <property type="entry name" value="ATG16"/>
    <property type="match status" value="1"/>
</dbReference>
<dbReference type="Pfam" id="PF00400">
    <property type="entry name" value="WD40"/>
    <property type="match status" value="5"/>
</dbReference>
<dbReference type="PRINTS" id="PR00320">
    <property type="entry name" value="GPROTEINBRPT"/>
</dbReference>
<dbReference type="SMART" id="SM00320">
    <property type="entry name" value="WD40"/>
    <property type="match status" value="7"/>
</dbReference>
<dbReference type="SUPFAM" id="SSF50978">
    <property type="entry name" value="WD40 repeat-like"/>
    <property type="match status" value="1"/>
</dbReference>
<dbReference type="PROSITE" id="PS00678">
    <property type="entry name" value="WD_REPEATS_1"/>
    <property type="match status" value="2"/>
</dbReference>
<dbReference type="PROSITE" id="PS50082">
    <property type="entry name" value="WD_REPEATS_2"/>
    <property type="match status" value="5"/>
</dbReference>
<dbReference type="PROSITE" id="PS50294">
    <property type="entry name" value="WD_REPEATS_REGION"/>
    <property type="match status" value="1"/>
</dbReference>
<organism>
    <name type="scientific">Pongo abelii</name>
    <name type="common">Sumatran orangutan</name>
    <name type="synonym">Pongo pygmaeus abelii</name>
    <dbReference type="NCBI Taxonomy" id="9601"/>
    <lineage>
        <taxon>Eukaryota</taxon>
        <taxon>Metazoa</taxon>
        <taxon>Chordata</taxon>
        <taxon>Craniata</taxon>
        <taxon>Vertebrata</taxon>
        <taxon>Euteleostomi</taxon>
        <taxon>Mammalia</taxon>
        <taxon>Eutheria</taxon>
        <taxon>Euarchontoglires</taxon>
        <taxon>Primates</taxon>
        <taxon>Haplorrhini</taxon>
        <taxon>Catarrhini</taxon>
        <taxon>Hominidae</taxon>
        <taxon>Pongo</taxon>
    </lineage>
</organism>
<sequence>MSSGLRAADFPRWKRHISEQLRRRDRLQRQAFEEIILQYNKLLEKSDLHSVLAQKLQAEKHDVPNRHEISPGHDGTWNDSQLQEMAQLRIKHQEELTELHKKRGELAQLVIDLNNQMQRKDREMQMNEAKIAECLQTISDLETECLDLRTKLCDLERANQTLKDEYDALQITFTALEGKLRKTTEENQELVTRWMAEKAQEANRLNAENEKDSRRRQARLQKELAEAAKEPLPVEQDDDIEVIVDETSDHTEETSPVRAISRAATKRLSQPAGGLLDSITNIFGRRSVSSFPVPQDNVDTHPGSGKEVRVPTTALCVFDAHDGEVNAVQFSPGSRLLATGGMDRRVKLWEVFGEKCEFKGSLSGSNAGITSIEFDSAGSYLLAASNDFASRIWTVDDSRLRHTLTGHSGKVLSAKFLLDNARIVSGSHDRTLKHWDLRSKVCIKTVFAGSSCNDIVCTEQCVMSGHFDKKIRFWDIRSESIVREMELLGKITALDLNPERTELLSCSRDDLLKVIDLRTNAIKQTFSAPGFKCGSDWTRVVFSPDGSYVAAGSAEGSLYTWSVLTGKVEKVLSKQHSSSINAVAWSPSGLHVVSVDKGCKAVLWAQY</sequence>
<evidence type="ECO:0000250" key="1">
    <source>
        <dbReference type="UniProtKB" id="Q676U5"/>
    </source>
</evidence>
<evidence type="ECO:0000250" key="2">
    <source>
        <dbReference type="UniProtKB" id="Q8C0J2"/>
    </source>
</evidence>
<evidence type="ECO:0000255" key="3"/>
<evidence type="ECO:0000255" key="4">
    <source>
        <dbReference type="PROSITE-ProRule" id="PRU00221"/>
    </source>
</evidence>
<evidence type="ECO:0000305" key="5"/>
<reference key="1">
    <citation type="submission" date="2004-11" db="EMBL/GenBank/DDBJ databases">
        <authorList>
            <consortium name="The German cDNA consortium"/>
        </authorList>
    </citation>
    <scope>NUCLEOTIDE SEQUENCE [LARGE SCALE MRNA]</scope>
    <source>
        <tissue>Kidney</tissue>
    </source>
</reference>
<accession>Q5RAC9</accession>
<protein>
    <recommendedName>
        <fullName evidence="1">Autophagy-related protein 16-1</fullName>
    </recommendedName>
    <alternativeName>
        <fullName>APG16-like 1</fullName>
    </alternativeName>
</protein>
<gene>
    <name evidence="1" type="primary">ATG16L1</name>
    <name type="synonym">APG16L</name>
</gene>
<comment type="function">
    <text evidence="1 2">Plays an essential role in both canonical and non-canonical autophagy: interacts with ATG12-ATG5 to mediate the lipidation to ATG8 family proteins (MAP1LC3A, MAP1LC3B, MAP1LC3C, GABARAPL1, GABARAPL2 and GABARAP). Acts as a molecular hub, coordinating autophagy pathways via distinct domains that support either canonical or non-canonical signaling. During canonical autophagy, interacts with ATG12-ATG5 to mediate the conjugation of phosphatidylethanolamine (PE) to ATG8 proteins, to produce a membrane-bound activated form of ATG8. Thereby, controls the elongation of the nascent autophagosomal membrane. As part of the ATG8 conjugation system with ATG5 and ATG12, required for recruitment of LRRK2 to stressed lysosomes and induction of LRRK2 kinase activity in response to lysosomal stress (By similarity). Also involved in non-canonical autophagy, a parallel pathway involving conjugation of ATG8 proteins to single membranes at endolysosomal compartments, probably by catalyzing conjugation of phosphatidylserine (PS) to ATG8 (By similarity). Non-canonical autophagy plays a key role in epithelial cells to limit lethal infection by influenza A (IAV) virus (By similarity). Regulates mitochondrial antiviral signaling (MAVS)-dependent type I interferon (IFN-I) production. Negatively regulates NOD1- and NOD2-driven inflammatory cytokine response. Instead, promotes an autophagy-dependent antibacterial pathway together with NOD1 or NOD2. Plays a role in regulating morphology and function of Paneth cell (By similarity).</text>
</comment>
<comment type="subunit">
    <text evidence="1 2">Homodimer (By similarity). Homooligomer (By similarity). Heterooligomer with ATG16L2 (By similarity). Interacts with WIPI1. Interacts with WIPI2. Interacts with RB1CC1; the interaction is required for ULK1 complex-dependent autophagy. Interacts with ATG5 (By similarity). Part of the minor complex composed of 4 sets of ATG12-ATG5 and ATG16L1 (400 kDa); this complex interacts with ATG3 leading to disruption of ATG7 interaction and promotion of ATG8-like proteins lipidation (By similarity). Part of the major complex composed of 8 sets of ATG12-ATG5 and ATG16L1 (800 kDa) (By similarity). Interacts with RAB33B (GTP- and GDP-bound forms); the complex consists of a tetramer where two RAB33B molecules bind independently one molecule of the ATG16L1 homodimer; the interaction promotes ATG12-ATG5-ATG16L1 complex recruitment to phagophores. Interacts (via WD repeats) with TMEM59; the interaction mediates unconventional autophagic activity of TMEM59. Interacts with TLR2. Interacts (via WD repeats) with MEFV. Interacts with PPP1CA; the interaction dephosphorylates ATG16L1 causing dissociation of ATG12-ATG5-ATG16L1 complex. Interacts (via N-terminal) with CLTC. Interacts with NOD1. Interacts with NOD2. Interacts with TUFM. Interacts with TRIM16 (By similarity). Interacts (via WD repeats) with SPATA33 (By similarity). Interacts with IRGM (By similarity).</text>
</comment>
<comment type="subcellular location">
    <subcellularLocation>
        <location evidence="1">Cytoplasm</location>
    </subcellularLocation>
    <subcellularLocation>
        <location evidence="1">Preautophagosomal structure membrane</location>
        <topology evidence="5">Peripheral membrane protein</topology>
    </subcellularLocation>
    <subcellularLocation>
        <location evidence="1">Endosome membrane</location>
        <topology evidence="5">Peripheral membrane protein</topology>
    </subcellularLocation>
    <subcellularLocation>
        <location evidence="5">Lysosome membrane</location>
        <topology evidence="1">Peripheral membrane protein</topology>
    </subcellularLocation>
    <text evidence="1 2">Recruited to omegasomes membranes by WIPI2. Omegasomes are endoplasmic reticulum connected strutures at the origin of preautophagosomal structures. Localized to preautophagosomal structure (PAS) where it is involved in the membrane targeting of ATG5. Also localizes to discrete punctae along the ciliary axoneme (By similarity). Upon activation of non-canonical autophagy, recruited to single-membrane endolysosomal compartments (By similarity). Under starved conditions, the ATG12-ATG5-ATG16L1 complex is translocated to phagophores driven by RAB33B (By similarity).</text>
</comment>
<comment type="domain">
    <text evidence="1 2">The WD repeats are required for non-canonical autophagy but not for canonical autophagy (By similarity). The WD repeats are required for the recruitment of LRRK2 to stressed lysosomes (By similarity).</text>
</comment>
<comment type="PTM">
    <text evidence="1">Proteolytic cleavage by activated CASP3 leads to degradation and may regulate autophagy upon cellular stress and apoptotic stimuli.</text>
</comment>
<comment type="PTM">
    <text evidence="1">Phosphorylation at Ser-139 promotes association with the ATG12-ATG5 conjugate to form the ATG12-ATG5-ATG16L1 complex.</text>
</comment>
<comment type="similarity">
    <text evidence="5">Belongs to the WD repeat ATG16 family.</text>
</comment>
<feature type="chain" id="PRO_0000050850" description="Autophagy-related protein 16-1">
    <location>
        <begin position="1"/>
        <end position="607"/>
    </location>
</feature>
<feature type="repeat" description="WD 1" evidence="4">
    <location>
        <begin position="320"/>
        <end position="359"/>
    </location>
</feature>
<feature type="repeat" description="WD 2" evidence="4">
    <location>
        <begin position="364"/>
        <end position="403"/>
    </location>
</feature>
<feature type="repeat" description="WD 3" evidence="4">
    <location>
        <begin position="406"/>
        <end position="445"/>
    </location>
</feature>
<feature type="repeat" description="WD 4" evidence="4">
    <location>
        <begin position="447"/>
        <end position="484"/>
    </location>
</feature>
<feature type="repeat" description="WD 5" evidence="4">
    <location>
        <begin position="486"/>
        <end position="525"/>
    </location>
</feature>
<feature type="repeat" description="WD 6" evidence="4">
    <location>
        <begin position="532"/>
        <end position="573"/>
    </location>
</feature>
<feature type="repeat" description="WD 7" evidence="4">
    <location>
        <begin position="575"/>
        <end position="607"/>
    </location>
</feature>
<feature type="region of interest" description="Interaction with ATG5" evidence="1">
    <location>
        <begin position="13"/>
        <end position="43"/>
    </location>
</feature>
<feature type="region of interest" description="WIPI2-binding" evidence="1">
    <location>
        <begin position="207"/>
        <end position="230"/>
    </location>
</feature>
<feature type="region of interest" description="RB1CC1-binding" evidence="1">
    <location>
        <begin position="230"/>
        <end position="242"/>
    </location>
</feature>
<feature type="coiled-coil region" evidence="3">
    <location>
        <begin position="79"/>
        <end position="230"/>
    </location>
</feature>
<feature type="short sequence motif" description="Caspase cleavage">
    <location>
        <begin position="296"/>
        <end position="299"/>
    </location>
</feature>
<feature type="modified residue" description="Phosphoserine" evidence="1">
    <location>
        <position position="139"/>
    </location>
</feature>
<feature type="modified residue" description="Phosphoserine" evidence="1">
    <location>
        <position position="269"/>
    </location>
</feature>
<feature type="modified residue" description="Phosphoserine" evidence="1">
    <location>
        <position position="287"/>
    </location>
</feature>
<name>A16L1_PONAB</name>